<sequence>MGPSLETPEPVEDVLANPLKQKPQLVAPEPEHCPGPESEQAGTADSCAGCPNQAICASAPKGPDPDLPAITARLAGVKHKILVLSGKGGVGKSTLTAQLAQALATNPEATVGVMDTDICGPSIPKMLGVEAETIHVSGSGWSPVWAADNLAVMSIQFMLPNRDDAIIWRGPKKNGLIKQFLKDVEWGDLDFLLVDTPPGTSDEHLSVNTFLKESRIEGAVVVTTPQEVSLLDVRKEIDFCRKAGIRILGLVENMSLFVCPKCTHATEIFQATTGGGRALAAEMGIPFLGAVPLDPRLGMACDYGESFFDSFPDSPACLALKQVVRGLAGQIGLDPKEVVPEG</sequence>
<organism>
    <name type="scientific">Chaetomium globosum (strain ATCC 6205 / CBS 148.51 / DSM 1962 / NBRC 6347 / NRRL 1970)</name>
    <name type="common">Soil fungus</name>
    <dbReference type="NCBI Taxonomy" id="306901"/>
    <lineage>
        <taxon>Eukaryota</taxon>
        <taxon>Fungi</taxon>
        <taxon>Dikarya</taxon>
        <taxon>Ascomycota</taxon>
        <taxon>Pezizomycotina</taxon>
        <taxon>Sordariomycetes</taxon>
        <taxon>Sordariomycetidae</taxon>
        <taxon>Sordariales</taxon>
        <taxon>Chaetomiaceae</taxon>
        <taxon>Chaetomium</taxon>
    </lineage>
</organism>
<accession>Q2H317</accession>
<dbReference type="EMBL" id="CH408032">
    <property type="protein sequence ID" value="EAQ87210.1"/>
    <property type="molecule type" value="Genomic_DNA"/>
</dbReference>
<dbReference type="RefSeq" id="XP_001223043.1">
    <property type="nucleotide sequence ID" value="XM_001223042.1"/>
</dbReference>
<dbReference type="SMR" id="Q2H317"/>
<dbReference type="FunCoup" id="Q2H317">
    <property type="interactions" value="521"/>
</dbReference>
<dbReference type="STRING" id="306901.Q2H317"/>
<dbReference type="GeneID" id="4392560"/>
<dbReference type="VEuPathDB" id="FungiDB:CHGG_03829"/>
<dbReference type="eggNOG" id="KOG3022">
    <property type="taxonomic scope" value="Eukaryota"/>
</dbReference>
<dbReference type="HOGENOM" id="CLU_024839_0_1_1"/>
<dbReference type="InParanoid" id="Q2H317"/>
<dbReference type="OMA" id="VSGCPMR"/>
<dbReference type="OrthoDB" id="1741334at2759"/>
<dbReference type="Proteomes" id="UP000001056">
    <property type="component" value="Unassembled WGS sequence"/>
</dbReference>
<dbReference type="GO" id="GO:0005829">
    <property type="term" value="C:cytosol"/>
    <property type="evidence" value="ECO:0007669"/>
    <property type="project" value="TreeGrafter"/>
</dbReference>
<dbReference type="GO" id="GO:0051539">
    <property type="term" value="F:4 iron, 4 sulfur cluster binding"/>
    <property type="evidence" value="ECO:0007669"/>
    <property type="project" value="UniProtKB-UniRule"/>
</dbReference>
<dbReference type="GO" id="GO:0005524">
    <property type="term" value="F:ATP binding"/>
    <property type="evidence" value="ECO:0007669"/>
    <property type="project" value="UniProtKB-KW"/>
</dbReference>
<dbReference type="GO" id="GO:0140663">
    <property type="term" value="F:ATP-dependent FeS chaperone activity"/>
    <property type="evidence" value="ECO:0007669"/>
    <property type="project" value="InterPro"/>
</dbReference>
<dbReference type="GO" id="GO:0046872">
    <property type="term" value="F:metal ion binding"/>
    <property type="evidence" value="ECO:0007669"/>
    <property type="project" value="UniProtKB-KW"/>
</dbReference>
<dbReference type="GO" id="GO:0016226">
    <property type="term" value="P:iron-sulfur cluster assembly"/>
    <property type="evidence" value="ECO:0007669"/>
    <property type="project" value="UniProtKB-UniRule"/>
</dbReference>
<dbReference type="CDD" id="cd02037">
    <property type="entry name" value="Mrp_NBP35"/>
    <property type="match status" value="1"/>
</dbReference>
<dbReference type="FunFam" id="3.40.50.300:FF:000427">
    <property type="entry name" value="Cytosolic Fe-S cluster assembly factor NUBP1"/>
    <property type="match status" value="1"/>
</dbReference>
<dbReference type="Gene3D" id="3.40.50.300">
    <property type="entry name" value="P-loop containing nucleotide triphosphate hydrolases"/>
    <property type="match status" value="1"/>
</dbReference>
<dbReference type="HAMAP" id="MF_02040">
    <property type="entry name" value="Mrp_NBP35"/>
    <property type="match status" value="1"/>
</dbReference>
<dbReference type="HAMAP" id="MF_03038">
    <property type="entry name" value="NUBP1"/>
    <property type="match status" value="1"/>
</dbReference>
<dbReference type="InterPro" id="IPR000808">
    <property type="entry name" value="Mrp-like_CS"/>
</dbReference>
<dbReference type="InterPro" id="IPR019591">
    <property type="entry name" value="Mrp/NBP35_ATP-bd"/>
</dbReference>
<dbReference type="InterPro" id="IPR028601">
    <property type="entry name" value="NUBP1/Nbp35"/>
</dbReference>
<dbReference type="InterPro" id="IPR027417">
    <property type="entry name" value="P-loop_NTPase"/>
</dbReference>
<dbReference type="InterPro" id="IPR033756">
    <property type="entry name" value="YlxH/NBP35"/>
</dbReference>
<dbReference type="PANTHER" id="PTHR23264:SF35">
    <property type="entry name" value="CYTOSOLIC FE-S CLUSTER ASSEMBLY FACTOR NUBP1"/>
    <property type="match status" value="1"/>
</dbReference>
<dbReference type="PANTHER" id="PTHR23264">
    <property type="entry name" value="NUCLEOTIDE-BINDING PROTEIN NBP35 YEAST -RELATED"/>
    <property type="match status" value="1"/>
</dbReference>
<dbReference type="Pfam" id="PF10609">
    <property type="entry name" value="ParA"/>
    <property type="match status" value="1"/>
</dbReference>
<dbReference type="SUPFAM" id="SSF52540">
    <property type="entry name" value="P-loop containing nucleoside triphosphate hydrolases"/>
    <property type="match status" value="1"/>
</dbReference>
<dbReference type="PROSITE" id="PS01215">
    <property type="entry name" value="MRP"/>
    <property type="match status" value="1"/>
</dbReference>
<gene>
    <name evidence="1" type="primary">NBP35</name>
    <name type="ORF">CHGG_03829</name>
</gene>
<keyword id="KW-0004">4Fe-4S</keyword>
<keyword id="KW-0067">ATP-binding</keyword>
<keyword id="KW-0963">Cytoplasm</keyword>
<keyword id="KW-0408">Iron</keyword>
<keyword id="KW-0411">Iron-sulfur</keyword>
<keyword id="KW-0479">Metal-binding</keyword>
<keyword id="KW-0547">Nucleotide-binding</keyword>
<keyword id="KW-1185">Reference proteome</keyword>
<evidence type="ECO:0000255" key="1">
    <source>
        <dbReference type="HAMAP-Rule" id="MF_03038"/>
    </source>
</evidence>
<evidence type="ECO:0000256" key="2">
    <source>
        <dbReference type="SAM" id="MobiDB-lite"/>
    </source>
</evidence>
<name>NBP35_CHAGB</name>
<feature type="chain" id="PRO_0000278893" description="Cytosolic Fe-S cluster assembly factor NBP35">
    <location>
        <begin position="1"/>
        <end position="342"/>
    </location>
</feature>
<feature type="region of interest" description="Disordered" evidence="2">
    <location>
        <begin position="1"/>
        <end position="45"/>
    </location>
</feature>
<feature type="binding site" evidence="1">
    <location>
        <position position="33"/>
    </location>
    <ligand>
        <name>[4Fe-4S] cluster</name>
        <dbReference type="ChEBI" id="CHEBI:49883"/>
        <label>1</label>
    </ligand>
</feature>
<feature type="binding site" evidence="1">
    <location>
        <position position="47"/>
    </location>
    <ligand>
        <name>[4Fe-4S] cluster</name>
        <dbReference type="ChEBI" id="CHEBI:49883"/>
        <label>1</label>
    </ligand>
</feature>
<feature type="binding site" evidence="1">
    <location>
        <position position="50"/>
    </location>
    <ligand>
        <name>[4Fe-4S] cluster</name>
        <dbReference type="ChEBI" id="CHEBI:49883"/>
        <label>1</label>
    </ligand>
</feature>
<feature type="binding site" evidence="1">
    <location>
        <position position="56"/>
    </location>
    <ligand>
        <name>[4Fe-4S] cluster</name>
        <dbReference type="ChEBI" id="CHEBI:49883"/>
        <label>1</label>
    </ligand>
</feature>
<feature type="binding site" evidence="1">
    <location>
        <begin position="86"/>
        <end position="93"/>
    </location>
    <ligand>
        <name>ATP</name>
        <dbReference type="ChEBI" id="CHEBI:30616"/>
    </ligand>
</feature>
<feature type="binding site" evidence="1">
    <location>
        <position position="259"/>
    </location>
    <ligand>
        <name>[4Fe-4S] cluster</name>
        <dbReference type="ChEBI" id="CHEBI:49883"/>
        <label>2</label>
        <note>ligand shared with heterodimeric partner</note>
    </ligand>
</feature>
<feature type="binding site" evidence="1">
    <location>
        <position position="262"/>
    </location>
    <ligand>
        <name>[4Fe-4S] cluster</name>
        <dbReference type="ChEBI" id="CHEBI:49883"/>
        <label>2</label>
        <note>ligand shared with heterodimeric partner</note>
    </ligand>
</feature>
<proteinExistence type="inferred from homology"/>
<comment type="function">
    <text evidence="1">Component of the cytosolic iron-sulfur (Fe/S) protein assembly (CIA) machinery. Required for maturation of extramitochondrial Fe-S proteins. The NBP35-CFD1 heterotetramer forms a Fe-S scaffold complex, mediating the de novo assembly of an Fe-S cluster and its transfer to target apoproteins.</text>
</comment>
<comment type="cofactor">
    <cofactor evidence="1">
        <name>[4Fe-4S] cluster</name>
        <dbReference type="ChEBI" id="CHEBI:49883"/>
    </cofactor>
    <text evidence="1">Binds 4 [4Fe-4S] clusters per heterotetramer. Contains two stable clusters in the N-termini of NBP35 and two labile, bridging clusters between subunits of the NBP35-CFD1 heterotetramer.</text>
</comment>
<comment type="subunit">
    <text evidence="1">Heterotetramer of 2 NBP35 and 2 CFD1 chains.</text>
</comment>
<comment type="subcellular location">
    <subcellularLocation>
        <location evidence="1">Cytoplasm</location>
    </subcellularLocation>
</comment>
<comment type="similarity">
    <text evidence="1">Belongs to the Mrp/NBP35 ATP-binding proteins family. NUBP1/NBP35 subfamily.</text>
</comment>
<reference key="1">
    <citation type="journal article" date="2015" name="Genome Announc.">
        <title>Draft genome sequence of the cellulolytic fungus Chaetomium globosum.</title>
        <authorList>
            <person name="Cuomo C.A."/>
            <person name="Untereiner W.A."/>
            <person name="Ma L.-J."/>
            <person name="Grabherr M."/>
            <person name="Birren B.W."/>
        </authorList>
    </citation>
    <scope>NUCLEOTIDE SEQUENCE [LARGE SCALE GENOMIC DNA]</scope>
    <source>
        <strain>ATCC 6205 / CBS 148.51 / DSM 1962 / NBRC 6347 / NRRL 1970</strain>
    </source>
</reference>
<protein>
    <recommendedName>
        <fullName evidence="1">Cytosolic Fe-S cluster assembly factor NBP35</fullName>
    </recommendedName>
    <alternativeName>
        <fullName evidence="1">Nucleotide-binding protein 35</fullName>
    </alternativeName>
</protein>